<accession>A8G8F8</accession>
<proteinExistence type="inferred from homology"/>
<keyword id="KW-0963">Cytoplasm</keyword>
<keyword id="KW-0227">DNA damage</keyword>
<keyword id="KW-0234">DNA repair</keyword>
<keyword id="KW-0255">Endonuclease</keyword>
<keyword id="KW-0378">Hydrolase</keyword>
<keyword id="KW-0460">Magnesium</keyword>
<keyword id="KW-0479">Metal-binding</keyword>
<keyword id="KW-0540">Nuclease</keyword>
<gene>
    <name evidence="1" type="primary">nfi</name>
    <name type="ordered locus">Spro_0288</name>
</gene>
<evidence type="ECO:0000255" key="1">
    <source>
        <dbReference type="HAMAP-Rule" id="MF_00801"/>
    </source>
</evidence>
<reference key="1">
    <citation type="submission" date="2007-09" db="EMBL/GenBank/DDBJ databases">
        <title>Complete sequence of chromosome of Serratia proteamaculans 568.</title>
        <authorList>
            <consortium name="US DOE Joint Genome Institute"/>
            <person name="Copeland A."/>
            <person name="Lucas S."/>
            <person name="Lapidus A."/>
            <person name="Barry K."/>
            <person name="Glavina del Rio T."/>
            <person name="Dalin E."/>
            <person name="Tice H."/>
            <person name="Pitluck S."/>
            <person name="Chain P."/>
            <person name="Malfatti S."/>
            <person name="Shin M."/>
            <person name="Vergez L."/>
            <person name="Schmutz J."/>
            <person name="Larimer F."/>
            <person name="Land M."/>
            <person name="Hauser L."/>
            <person name="Kyrpides N."/>
            <person name="Kim E."/>
            <person name="Taghavi S."/>
            <person name="Newman L."/>
            <person name="Vangronsveld J."/>
            <person name="van der Lelie D."/>
            <person name="Richardson P."/>
        </authorList>
    </citation>
    <scope>NUCLEOTIDE SEQUENCE [LARGE SCALE GENOMIC DNA]</scope>
    <source>
        <strain>568</strain>
    </source>
</reference>
<sequence>MIDTQALRAEQRLRASEVIRQDDFLVVPPAFIAGADVGFEQEGAVTRAAIAILRYPSLELVEYQVARVATTMPYIPGFLSFREYPALLAAWEQLHQKPDLVLVDGHGISHPRRLGVASHFGLLVNVPTIGVAKKRLCGKFAPLDEATDALAPLEDKGEQLGWVWRSKARCNPLFISTGHRVGADSALAWVQRCMAGYRLPEPTRWADAIASRRPAFQRWLQQHPEVSQ</sequence>
<comment type="function">
    <text evidence="1">DNA repair enzyme involved in the repair of deaminated bases. Selectively cleaves double-stranded DNA at the second phosphodiester bond 3' to a deoxyinosine leaving behind the intact lesion on the nicked DNA.</text>
</comment>
<comment type="catalytic activity">
    <reaction evidence="1">
        <text>Endonucleolytic cleavage at apurinic or apyrimidinic sites to products with a 5'-phosphate.</text>
        <dbReference type="EC" id="3.1.21.7"/>
    </reaction>
</comment>
<comment type="cofactor">
    <cofactor evidence="1">
        <name>Mg(2+)</name>
        <dbReference type="ChEBI" id="CHEBI:18420"/>
    </cofactor>
</comment>
<comment type="subcellular location">
    <subcellularLocation>
        <location evidence="1">Cytoplasm</location>
    </subcellularLocation>
</comment>
<comment type="similarity">
    <text evidence="1">Belongs to the endonuclease V family.</text>
</comment>
<protein>
    <recommendedName>
        <fullName evidence="1">Endonuclease V</fullName>
        <ecNumber evidence="1">3.1.21.7</ecNumber>
    </recommendedName>
    <alternativeName>
        <fullName evidence="1">Deoxyinosine 3'endonuclease</fullName>
    </alternativeName>
    <alternativeName>
        <fullName evidence="1">Deoxyribonuclease V</fullName>
        <shortName evidence="1">DNase V</shortName>
    </alternativeName>
</protein>
<feature type="chain" id="PRO_1000072845" description="Endonuclease V">
    <location>
        <begin position="1"/>
        <end position="228"/>
    </location>
</feature>
<feature type="binding site" evidence="1">
    <location>
        <position position="36"/>
    </location>
    <ligand>
        <name>Mg(2+)</name>
        <dbReference type="ChEBI" id="CHEBI:18420"/>
    </ligand>
</feature>
<feature type="binding site" evidence="1">
    <location>
        <position position="104"/>
    </location>
    <ligand>
        <name>Mg(2+)</name>
        <dbReference type="ChEBI" id="CHEBI:18420"/>
    </ligand>
</feature>
<feature type="site" description="Interaction with target DNA" evidence="1">
    <location>
        <position position="74"/>
    </location>
</feature>
<name>NFI_SERP5</name>
<dbReference type="EC" id="3.1.21.7" evidence="1"/>
<dbReference type="EMBL" id="CP000826">
    <property type="protein sequence ID" value="ABV39398.1"/>
    <property type="molecule type" value="Genomic_DNA"/>
</dbReference>
<dbReference type="SMR" id="A8G8F8"/>
<dbReference type="STRING" id="399741.Spro_0288"/>
<dbReference type="KEGG" id="spe:Spro_0288"/>
<dbReference type="eggNOG" id="COG1515">
    <property type="taxonomic scope" value="Bacteria"/>
</dbReference>
<dbReference type="HOGENOM" id="CLU_047631_1_0_6"/>
<dbReference type="OrthoDB" id="9790916at2"/>
<dbReference type="GO" id="GO:0005737">
    <property type="term" value="C:cytoplasm"/>
    <property type="evidence" value="ECO:0007669"/>
    <property type="project" value="UniProtKB-SubCell"/>
</dbReference>
<dbReference type="GO" id="GO:0043737">
    <property type="term" value="F:deoxyribonuclease V activity"/>
    <property type="evidence" value="ECO:0007669"/>
    <property type="project" value="UniProtKB-UniRule"/>
</dbReference>
<dbReference type="GO" id="GO:0000287">
    <property type="term" value="F:magnesium ion binding"/>
    <property type="evidence" value="ECO:0007669"/>
    <property type="project" value="UniProtKB-UniRule"/>
</dbReference>
<dbReference type="GO" id="GO:0016891">
    <property type="term" value="F:RNA endonuclease activity, producing 5'-phosphomonoesters"/>
    <property type="evidence" value="ECO:0007669"/>
    <property type="project" value="TreeGrafter"/>
</dbReference>
<dbReference type="GO" id="GO:0003727">
    <property type="term" value="F:single-stranded RNA binding"/>
    <property type="evidence" value="ECO:0007669"/>
    <property type="project" value="TreeGrafter"/>
</dbReference>
<dbReference type="GO" id="GO:0006281">
    <property type="term" value="P:DNA repair"/>
    <property type="evidence" value="ECO:0007669"/>
    <property type="project" value="UniProtKB-UniRule"/>
</dbReference>
<dbReference type="CDD" id="cd06559">
    <property type="entry name" value="Endonuclease_V"/>
    <property type="match status" value="1"/>
</dbReference>
<dbReference type="FunFam" id="3.30.2170.10:FF:000001">
    <property type="entry name" value="Endonuclease V"/>
    <property type="match status" value="1"/>
</dbReference>
<dbReference type="Gene3D" id="3.30.2170.10">
    <property type="entry name" value="archaeoglobus fulgidus dsm 4304 superfamily"/>
    <property type="match status" value="1"/>
</dbReference>
<dbReference type="HAMAP" id="MF_00801">
    <property type="entry name" value="Endonuclease_5"/>
    <property type="match status" value="1"/>
</dbReference>
<dbReference type="InterPro" id="IPR007581">
    <property type="entry name" value="Endonuclease-V"/>
</dbReference>
<dbReference type="NCBIfam" id="NF008629">
    <property type="entry name" value="PRK11617.1"/>
    <property type="match status" value="1"/>
</dbReference>
<dbReference type="PANTHER" id="PTHR28511">
    <property type="entry name" value="ENDONUCLEASE V"/>
    <property type="match status" value="1"/>
</dbReference>
<dbReference type="PANTHER" id="PTHR28511:SF1">
    <property type="entry name" value="ENDONUCLEASE V"/>
    <property type="match status" value="1"/>
</dbReference>
<dbReference type="Pfam" id="PF04493">
    <property type="entry name" value="Endonuclease_5"/>
    <property type="match status" value="1"/>
</dbReference>
<organism>
    <name type="scientific">Serratia proteamaculans (strain 568)</name>
    <dbReference type="NCBI Taxonomy" id="399741"/>
    <lineage>
        <taxon>Bacteria</taxon>
        <taxon>Pseudomonadati</taxon>
        <taxon>Pseudomonadota</taxon>
        <taxon>Gammaproteobacteria</taxon>
        <taxon>Enterobacterales</taxon>
        <taxon>Yersiniaceae</taxon>
        <taxon>Serratia</taxon>
    </lineage>
</organism>